<proteinExistence type="evidence at transcript level"/>
<evidence type="ECO:0000250" key="1"/>
<evidence type="ECO:0000250" key="2">
    <source>
        <dbReference type="UniProtKB" id="O95273"/>
    </source>
</evidence>
<evidence type="ECO:0000305" key="3"/>
<keyword id="KW-0007">Acetylation</keyword>
<keyword id="KW-0131">Cell cycle</keyword>
<keyword id="KW-0963">Cytoplasm</keyword>
<keyword id="KW-0539">Nucleus</keyword>
<keyword id="KW-0597">Phosphoprotein</keyword>
<keyword id="KW-1185">Reference proteome</keyword>
<gene>
    <name type="primary">CCNDBP1</name>
    <name type="ORF">QtsA-13844</name>
</gene>
<comment type="function">
    <text evidence="1">May negatively regulate cell cycle progression. May act at least in part via inhibition of the cyclin-D1/CDK4 complex, thereby preventing phosphorylation of RB1 and blocking E2F-dependent transcription (By similarity).</text>
</comment>
<comment type="subunit">
    <text evidence="1">Interacts with CCND1 and GRAP2. May also interact with COPS5, RPLP0, SIRT6, SYF2 and TCF3.</text>
</comment>
<comment type="subcellular location">
    <subcellularLocation>
        <location evidence="1">Cytoplasm</location>
    </subcellularLocation>
    <subcellularLocation>
        <location evidence="1">Nucleus</location>
    </subcellularLocation>
</comment>
<comment type="PTM">
    <text evidence="1">Phosphorylated.</text>
</comment>
<comment type="similarity">
    <text evidence="3">Belongs to the CCNDBP1 family.</text>
</comment>
<protein>
    <recommendedName>
        <fullName>Cyclin-D1-binding protein 1</fullName>
    </recommendedName>
</protein>
<name>CCDB1_MACFA</name>
<feature type="initiator methionine" description="Removed" evidence="2">
    <location>
        <position position="1"/>
    </location>
</feature>
<feature type="chain" id="PRO_0000323373" description="Cyclin-D1-binding protein 1">
    <location>
        <begin position="2"/>
        <end position="332"/>
    </location>
</feature>
<feature type="region of interest" description="Required for interaction with CCND1" evidence="1">
    <location>
        <begin position="2"/>
        <end position="208"/>
    </location>
</feature>
<feature type="region of interest" description="Interaction with RPLP0" evidence="1">
    <location>
        <begin position="2"/>
        <end position="190"/>
    </location>
</feature>
<feature type="region of interest" description="Interaction with TCF3" evidence="1">
    <location>
        <begin position="2"/>
        <end position="184"/>
    </location>
</feature>
<feature type="region of interest" description="Interaction with TCF3" evidence="1">
    <location>
        <begin position="150"/>
        <end position="332"/>
    </location>
</feature>
<feature type="region of interest" description="Interaction with RPLP0" evidence="1">
    <location>
        <begin position="240"/>
        <end position="332"/>
    </location>
</feature>
<feature type="modified residue" description="N-acetylalanine" evidence="2">
    <location>
        <position position="2"/>
    </location>
</feature>
<dbReference type="EMBL" id="AB168652">
    <property type="protein sequence ID" value="BAE00763.1"/>
    <property type="molecule type" value="mRNA"/>
</dbReference>
<dbReference type="RefSeq" id="NP_001270015.1">
    <property type="nucleotide sequence ID" value="NM_001283086.1"/>
</dbReference>
<dbReference type="SMR" id="Q4R809"/>
<dbReference type="STRING" id="9541.ENSMFAP00000016011"/>
<dbReference type="eggNOG" id="ENOG502SGCW">
    <property type="taxonomic scope" value="Eukaryota"/>
</dbReference>
<dbReference type="Proteomes" id="UP000233100">
    <property type="component" value="Unplaced"/>
</dbReference>
<dbReference type="GO" id="GO:0005737">
    <property type="term" value="C:cytoplasm"/>
    <property type="evidence" value="ECO:0007669"/>
    <property type="project" value="UniProtKB-SubCell"/>
</dbReference>
<dbReference type="GO" id="GO:0005634">
    <property type="term" value="C:nucleus"/>
    <property type="evidence" value="ECO:0007669"/>
    <property type="project" value="UniProtKB-SubCell"/>
</dbReference>
<dbReference type="FunFam" id="1.20.1410.10:FF:000005">
    <property type="entry name" value="cyclin-D1-binding protein 1"/>
    <property type="match status" value="1"/>
</dbReference>
<dbReference type="FunFam" id="1.20.1420.10:FF:000008">
    <property type="entry name" value="Cyclin-D1-binding protein 1 homolog"/>
    <property type="match status" value="1"/>
</dbReference>
<dbReference type="Gene3D" id="1.20.1410.10">
    <property type="entry name" value="I/LWEQ domain"/>
    <property type="match status" value="1"/>
</dbReference>
<dbReference type="Gene3D" id="1.20.1420.10">
    <property type="entry name" value="Talin, central domain"/>
    <property type="match status" value="1"/>
</dbReference>
<dbReference type="InterPro" id="IPR026907">
    <property type="entry name" value="GCIP-like"/>
</dbReference>
<dbReference type="InterPro" id="IPR049317">
    <property type="entry name" value="GCIP-like_N"/>
</dbReference>
<dbReference type="InterPro" id="IPR049318">
    <property type="entry name" value="GCIP_C"/>
</dbReference>
<dbReference type="PANTHER" id="PTHR15492">
    <property type="entry name" value="CYCLIN D1-BINDING PROTEIN 1"/>
    <property type="match status" value="1"/>
</dbReference>
<dbReference type="PANTHER" id="PTHR15492:SF1">
    <property type="entry name" value="CYCLIN-D1-BINDING PROTEIN 1"/>
    <property type="match status" value="1"/>
</dbReference>
<dbReference type="Pfam" id="PF20936">
    <property type="entry name" value="GCIP_C"/>
    <property type="match status" value="1"/>
</dbReference>
<dbReference type="Pfam" id="PF13324">
    <property type="entry name" value="GCIP_N"/>
    <property type="match status" value="1"/>
</dbReference>
<accession>Q4R809</accession>
<organism>
    <name type="scientific">Macaca fascicularis</name>
    <name type="common">Crab-eating macaque</name>
    <name type="synonym">Cynomolgus monkey</name>
    <dbReference type="NCBI Taxonomy" id="9541"/>
    <lineage>
        <taxon>Eukaryota</taxon>
        <taxon>Metazoa</taxon>
        <taxon>Chordata</taxon>
        <taxon>Craniata</taxon>
        <taxon>Vertebrata</taxon>
        <taxon>Euteleostomi</taxon>
        <taxon>Mammalia</taxon>
        <taxon>Eutheria</taxon>
        <taxon>Euarchontoglires</taxon>
        <taxon>Primates</taxon>
        <taxon>Haplorrhini</taxon>
        <taxon>Catarrhini</taxon>
        <taxon>Cercopithecidae</taxon>
        <taxon>Cercopithecinae</taxon>
        <taxon>Macaca</taxon>
    </lineage>
</organism>
<reference key="1">
    <citation type="submission" date="2005-06" db="EMBL/GenBank/DDBJ databases">
        <title>DNA sequences of macaque genes expressed in brain or testis and its evolutionary implications.</title>
        <authorList>
            <consortium name="International consortium for macaque cDNA sequencing and analysis"/>
        </authorList>
    </citation>
    <scope>NUCLEOTIDE SEQUENCE [LARGE SCALE MRNA]</scope>
    <source>
        <tissue>Testis</tissue>
    </source>
</reference>
<sequence>MASATAPAAAAPTLAPPLQQLRHLAEELRLLLPRVRVGEAQETTEEFNREMFWRRLNEAAVTVSREATTLTTVFSQLPLPSPQETQKFCEQVHAAIKAFIAVYYLLPKDQGITLRKLVRGATLDIVDGMAQLMEVLSITPTQSPENNDLISYNSVWVACQQMPQIPRDNKAAALLMLTKNVDFVKDAHEEMERAVEECDPYSGLLNDTDENNSDNHNDEDDVLGFPSNQDLYWSEDDQELIIPCLALVRASKACLKKIRILVAENGKKDQVAQLDDIVDISDEISPSVDDLALSIYPPMCHLTVRINSAKLVSVLKKALMSAFKMELECLLD</sequence>